<organism>
    <name type="scientific">Methanococcus maripaludis (strain C7 / ATCC BAA-1331)</name>
    <dbReference type="NCBI Taxonomy" id="426368"/>
    <lineage>
        <taxon>Archaea</taxon>
        <taxon>Methanobacteriati</taxon>
        <taxon>Methanobacteriota</taxon>
        <taxon>Methanomada group</taxon>
        <taxon>Methanococci</taxon>
        <taxon>Methanococcales</taxon>
        <taxon>Methanococcaceae</taxon>
        <taxon>Methanococcus</taxon>
    </lineage>
</organism>
<comment type="similarity">
    <text evidence="1">Belongs to the UPF0254 family.</text>
</comment>
<name>Y182_METM7</name>
<feature type="chain" id="PRO_1000147677" description="UPF0254 protein MmarC7_0182">
    <location>
        <begin position="1"/>
        <end position="165"/>
    </location>
</feature>
<sequence length="165" mass="18264">MISVATAECFTHGKIGVKIHKMACGYKEVEKDPNYSIINGNVFVMASMFLPSKKGIESLLDVKLPEPDYVFKYSKAYTQENDILVAKIVANALKNKLNCDIAISSTAGIGNGAICILTDKKEYNFTSEVYGDLIKGENILKRQENGINKAFDTVIEILKKEYGLK</sequence>
<reference key="1">
    <citation type="submission" date="2007-06" db="EMBL/GenBank/DDBJ databases">
        <title>Complete sequence of Methanococcus maripaludis C7.</title>
        <authorList>
            <consortium name="US DOE Joint Genome Institute"/>
            <person name="Copeland A."/>
            <person name="Lucas S."/>
            <person name="Lapidus A."/>
            <person name="Barry K."/>
            <person name="Glavina del Rio T."/>
            <person name="Dalin E."/>
            <person name="Tice H."/>
            <person name="Pitluck S."/>
            <person name="Clum A."/>
            <person name="Schmutz J."/>
            <person name="Larimer F."/>
            <person name="Land M."/>
            <person name="Hauser L."/>
            <person name="Kyrpides N."/>
            <person name="Anderson I."/>
            <person name="Sieprawska-Lupa M."/>
            <person name="Whitman W.B."/>
            <person name="Richardson P."/>
        </authorList>
    </citation>
    <scope>NUCLEOTIDE SEQUENCE [LARGE SCALE GENOMIC DNA]</scope>
    <source>
        <strain>C7 / ATCC BAA-1331</strain>
    </source>
</reference>
<protein>
    <recommendedName>
        <fullName evidence="1">UPF0254 protein MmarC7_0182</fullName>
    </recommendedName>
</protein>
<proteinExistence type="inferred from homology"/>
<accession>A6VFM6</accession>
<evidence type="ECO:0000255" key="1">
    <source>
        <dbReference type="HAMAP-Rule" id="MF_00673"/>
    </source>
</evidence>
<gene>
    <name type="ordered locus">MmarC7_0182</name>
</gene>
<dbReference type="EMBL" id="CP000745">
    <property type="protein sequence ID" value="ABR65252.1"/>
    <property type="molecule type" value="Genomic_DNA"/>
</dbReference>
<dbReference type="SMR" id="A6VFM6"/>
<dbReference type="STRING" id="426368.MmarC7_0182"/>
<dbReference type="KEGG" id="mmz:MmarC7_0182"/>
<dbReference type="eggNOG" id="arCOG04865">
    <property type="taxonomic scope" value="Archaea"/>
</dbReference>
<dbReference type="HOGENOM" id="CLU_1451416_0_0_2"/>
<dbReference type="OrthoDB" id="59686at2157"/>
<dbReference type="HAMAP" id="MF_00673">
    <property type="entry name" value="UPF0254"/>
    <property type="match status" value="1"/>
</dbReference>
<dbReference type="InterPro" id="IPR009625">
    <property type="entry name" value="HcgF"/>
</dbReference>
<dbReference type="NCBIfam" id="NF002122">
    <property type="entry name" value="PRK00962.1"/>
    <property type="match status" value="1"/>
</dbReference>
<dbReference type="Pfam" id="PF06787">
    <property type="entry name" value="HcgF"/>
    <property type="match status" value="1"/>
</dbReference>